<gene>
    <name type="primary">HSFA2B</name>
    <name type="synonym">HS1</name>
    <name type="synonym">HSF18</name>
    <name type="synonym">HSF5</name>
    <name type="ordered locus">Os07g0178600</name>
    <name type="ordered locus">LOC_Os07g08140</name>
    <name type="ORF">OJ1361_E02.115</name>
    <name type="ORF">OsJ_022374</name>
</gene>
<keyword id="KW-0175">Coiled coil</keyword>
<keyword id="KW-0963">Cytoplasm</keyword>
<keyword id="KW-0238">DNA-binding</keyword>
<keyword id="KW-0539">Nucleus</keyword>
<keyword id="KW-0597">Phosphoprotein</keyword>
<keyword id="KW-1185">Reference proteome</keyword>
<keyword id="KW-0346">Stress response</keyword>
<keyword id="KW-0804">Transcription</keyword>
<keyword id="KW-0805">Transcription regulation</keyword>
<organism>
    <name type="scientific">Oryza sativa subsp. japonica</name>
    <name type="common">Rice</name>
    <dbReference type="NCBI Taxonomy" id="39947"/>
    <lineage>
        <taxon>Eukaryota</taxon>
        <taxon>Viridiplantae</taxon>
        <taxon>Streptophyta</taxon>
        <taxon>Embryophyta</taxon>
        <taxon>Tracheophyta</taxon>
        <taxon>Spermatophyta</taxon>
        <taxon>Magnoliopsida</taxon>
        <taxon>Liliopsida</taxon>
        <taxon>Poales</taxon>
        <taxon>Poaceae</taxon>
        <taxon>BOP clade</taxon>
        <taxon>Oryzoideae</taxon>
        <taxon>Oryzeae</taxon>
        <taxon>Oryzinae</taxon>
        <taxon>Oryza</taxon>
        <taxon>Oryza sativa</taxon>
    </lineage>
</organism>
<reference key="1">
    <citation type="submission" date="2003-06" db="EMBL/GenBank/DDBJ databases">
        <title>Isolation a putative heat stress transcription factor of Oryza sativa.</title>
        <authorList>
            <person name="Quanhong Y."/>
            <person name="Rihe P."/>
            <person name="Aisheng X."/>
        </authorList>
    </citation>
    <scope>NUCLEOTIDE SEQUENCE [MRNA]</scope>
</reference>
<reference key="2">
    <citation type="submission" date="2003-07" db="EMBL/GenBank/DDBJ databases">
        <title>Isolation rice heat shock factor by modified yeast one-hybrid system method.</title>
        <authorList>
            <person name="Yao Q.-H."/>
            <person name="Peng R.-H."/>
            <person name="Xiong A.-S."/>
        </authorList>
    </citation>
    <scope>NUCLEOTIDE SEQUENCE [MRNA]</scope>
</reference>
<reference key="3">
    <citation type="journal article" date="2005" name="Nature">
        <title>The map-based sequence of the rice genome.</title>
        <authorList>
            <consortium name="International rice genome sequencing project (IRGSP)"/>
        </authorList>
    </citation>
    <scope>NUCLEOTIDE SEQUENCE [LARGE SCALE GENOMIC DNA]</scope>
    <source>
        <strain>cv. Nipponbare</strain>
    </source>
</reference>
<reference key="4">
    <citation type="journal article" date="2008" name="Nucleic Acids Res.">
        <title>The rice annotation project database (RAP-DB): 2008 update.</title>
        <authorList>
            <consortium name="The rice annotation project (RAP)"/>
        </authorList>
    </citation>
    <scope>GENOME REANNOTATION</scope>
    <source>
        <strain>cv. Nipponbare</strain>
    </source>
</reference>
<reference key="5">
    <citation type="journal article" date="2013" name="Rice">
        <title>Improvement of the Oryza sativa Nipponbare reference genome using next generation sequence and optical map data.</title>
        <authorList>
            <person name="Kawahara Y."/>
            <person name="de la Bastide M."/>
            <person name="Hamilton J.P."/>
            <person name="Kanamori H."/>
            <person name="McCombie W.R."/>
            <person name="Ouyang S."/>
            <person name="Schwartz D.C."/>
            <person name="Tanaka T."/>
            <person name="Wu J."/>
            <person name="Zhou S."/>
            <person name="Childs K.L."/>
            <person name="Davidson R.M."/>
            <person name="Lin H."/>
            <person name="Quesada-Ocampo L."/>
            <person name="Vaillancourt B."/>
            <person name="Sakai H."/>
            <person name="Lee S.S."/>
            <person name="Kim J."/>
            <person name="Numa H."/>
            <person name="Itoh T."/>
            <person name="Buell C.R."/>
            <person name="Matsumoto T."/>
        </authorList>
    </citation>
    <scope>GENOME REANNOTATION</scope>
    <source>
        <strain>cv. Nipponbare</strain>
    </source>
</reference>
<reference key="6">
    <citation type="journal article" date="2005" name="PLoS Biol.">
        <title>The genomes of Oryza sativa: a history of duplications.</title>
        <authorList>
            <person name="Yu J."/>
            <person name="Wang J."/>
            <person name="Lin W."/>
            <person name="Li S."/>
            <person name="Li H."/>
            <person name="Zhou J."/>
            <person name="Ni P."/>
            <person name="Dong W."/>
            <person name="Hu S."/>
            <person name="Zeng C."/>
            <person name="Zhang J."/>
            <person name="Zhang Y."/>
            <person name="Li R."/>
            <person name="Xu Z."/>
            <person name="Li S."/>
            <person name="Li X."/>
            <person name="Zheng H."/>
            <person name="Cong L."/>
            <person name="Lin L."/>
            <person name="Yin J."/>
            <person name="Geng J."/>
            <person name="Li G."/>
            <person name="Shi J."/>
            <person name="Liu J."/>
            <person name="Lv H."/>
            <person name="Li J."/>
            <person name="Wang J."/>
            <person name="Deng Y."/>
            <person name="Ran L."/>
            <person name="Shi X."/>
            <person name="Wang X."/>
            <person name="Wu Q."/>
            <person name="Li C."/>
            <person name="Ren X."/>
            <person name="Wang J."/>
            <person name="Wang X."/>
            <person name="Li D."/>
            <person name="Liu D."/>
            <person name="Zhang X."/>
            <person name="Ji Z."/>
            <person name="Zhao W."/>
            <person name="Sun Y."/>
            <person name="Zhang Z."/>
            <person name="Bao J."/>
            <person name="Han Y."/>
            <person name="Dong L."/>
            <person name="Ji J."/>
            <person name="Chen P."/>
            <person name="Wu S."/>
            <person name="Liu J."/>
            <person name="Xiao Y."/>
            <person name="Bu D."/>
            <person name="Tan J."/>
            <person name="Yang L."/>
            <person name="Ye C."/>
            <person name="Zhang J."/>
            <person name="Xu J."/>
            <person name="Zhou Y."/>
            <person name="Yu Y."/>
            <person name="Zhang B."/>
            <person name="Zhuang S."/>
            <person name="Wei H."/>
            <person name="Liu B."/>
            <person name="Lei M."/>
            <person name="Yu H."/>
            <person name="Li Y."/>
            <person name="Xu H."/>
            <person name="Wei S."/>
            <person name="He X."/>
            <person name="Fang L."/>
            <person name="Zhang Z."/>
            <person name="Zhang Y."/>
            <person name="Huang X."/>
            <person name="Su Z."/>
            <person name="Tong W."/>
            <person name="Li J."/>
            <person name="Tong Z."/>
            <person name="Li S."/>
            <person name="Ye J."/>
            <person name="Wang L."/>
            <person name="Fang L."/>
            <person name="Lei T."/>
            <person name="Chen C.-S."/>
            <person name="Chen H.-C."/>
            <person name="Xu Z."/>
            <person name="Li H."/>
            <person name="Huang H."/>
            <person name="Zhang F."/>
            <person name="Xu H."/>
            <person name="Li N."/>
            <person name="Zhao C."/>
            <person name="Li S."/>
            <person name="Dong L."/>
            <person name="Huang Y."/>
            <person name="Li L."/>
            <person name="Xi Y."/>
            <person name="Qi Q."/>
            <person name="Li W."/>
            <person name="Zhang B."/>
            <person name="Hu W."/>
            <person name="Zhang Y."/>
            <person name="Tian X."/>
            <person name="Jiao Y."/>
            <person name="Liang X."/>
            <person name="Jin J."/>
            <person name="Gao L."/>
            <person name="Zheng W."/>
            <person name="Hao B."/>
            <person name="Liu S.-M."/>
            <person name="Wang W."/>
            <person name="Yuan L."/>
            <person name="Cao M."/>
            <person name="McDermott J."/>
            <person name="Samudrala R."/>
            <person name="Wang J."/>
            <person name="Wong G.K.-S."/>
            <person name="Yang H."/>
        </authorList>
    </citation>
    <scope>NUCLEOTIDE SEQUENCE [LARGE SCALE GENOMIC DNA]</scope>
    <source>
        <strain>cv. Nipponbare</strain>
    </source>
</reference>
<reference key="7">
    <citation type="journal article" date="2004" name="J. Biosci.">
        <title>Heat stress response in plants: a complex game with chaperones and more than twenty heat stress transcription factors.</title>
        <authorList>
            <person name="Baniwal S.K."/>
            <person name="Bharti K."/>
            <person name="Chan K.Y."/>
            <person name="Fauth M."/>
            <person name="Ganguli A."/>
            <person name="Kotak S."/>
            <person name="Mishra S.K."/>
            <person name="Nover L."/>
            <person name="Port M."/>
            <person name="Scharf K.-D."/>
            <person name="Tripp J."/>
            <person name="Weber C."/>
            <person name="Zielinski D."/>
            <person name="von Koskull-Doering P."/>
        </authorList>
    </citation>
    <scope>GENE FAMILY</scope>
    <scope>NOMENCLATURE</scope>
</reference>
<reference key="8">
    <citation type="journal article" date="2008" name="J. Genet. Genomics">
        <title>Genome-wide analysis of heat shock transcription factor families in rice and Arabidopsis.</title>
        <authorList>
            <person name="Guo J."/>
            <person name="Wu J."/>
            <person name="Ji Q."/>
            <person name="Wang C."/>
            <person name="Luo L."/>
            <person name="Yuan Y."/>
            <person name="Wang Y."/>
            <person name="Wang J."/>
        </authorList>
    </citation>
    <scope>GENE FAMILY</scope>
    <scope>NOMENCLATURE</scope>
    <scope>DOMAIN AHA</scope>
</reference>
<reference key="9">
    <citation type="journal article" date="2008" name="Planta">
        <title>Expression of rice heat stress transcription factor OsHsfA2e enhances tolerance to environmental stresses in transgenic Arabidopsis.</title>
        <authorList>
            <person name="Yokotani N."/>
            <person name="Ichikawa T."/>
            <person name="Kondou Y."/>
            <person name="Matsui M."/>
            <person name="Hirochika H."/>
            <person name="Iwabuchi M."/>
            <person name="Oda K."/>
        </authorList>
    </citation>
    <scope>INDUCTION</scope>
</reference>
<name>HFA2B_ORYSJ</name>
<proteinExistence type="evidence at transcript level"/>
<evidence type="ECO:0000250" key="1"/>
<evidence type="ECO:0000255" key="2"/>
<evidence type="ECO:0000256" key="3">
    <source>
        <dbReference type="SAM" id="MobiDB-lite"/>
    </source>
</evidence>
<evidence type="ECO:0000269" key="4">
    <source>
    </source>
</evidence>
<evidence type="ECO:0000269" key="5">
    <source>
    </source>
</evidence>
<evidence type="ECO:0000305" key="6"/>
<sequence length="372" mass="41524">MDDPMLNAVKEEESHGDGGGLEVVAGEDGAAAVAAGVAPRPMEGLHDAGPPPFLTKTYDMVDDAGTDAAVSWSATSNSFVVWDPHAFATVLLPRFFKHNNFSSFVRQLNTYGFRKVDPDRWEFANENFLRGQRHLLKNIKRRKPPSHTASNQQSLGPYLEVGHFGYDAEIDRLKRDKQLLMAEVVKLRQEQQNTKANLKAMEDRLQGTEQRQQQMMAFLARVMKNPEFLKQLMSQNEMRKELQDAISKKRRRRIDQGPEVDDVGTSSSIEQESPALFDPQESVEFLIDGIPSDLENSAMDAGGLVEPQDFDVGASEQQQIGPQGELNDNFWEELLNEGLVGEENDNPVVEDDMNVLSEKMGYLNSNGPTAGE</sequence>
<dbReference type="EMBL" id="AY323488">
    <property type="protein sequence ID" value="AAP92754.1"/>
    <property type="molecule type" value="mRNA"/>
</dbReference>
<dbReference type="EMBL" id="AY344487">
    <property type="protein sequence ID" value="AAQ23059.1"/>
    <property type="molecule type" value="mRNA"/>
</dbReference>
<dbReference type="EMBL" id="AP003826">
    <property type="protein sequence ID" value="BAD30327.1"/>
    <property type="molecule type" value="Genomic_DNA"/>
</dbReference>
<dbReference type="EMBL" id="AP008213">
    <property type="protein sequence ID" value="BAF20942.1"/>
    <property type="molecule type" value="Genomic_DNA"/>
</dbReference>
<dbReference type="EMBL" id="AP014963">
    <property type="protein sequence ID" value="BAT00300.1"/>
    <property type="molecule type" value="Genomic_DNA"/>
</dbReference>
<dbReference type="EMBL" id="CM000144">
    <property type="protein sequence ID" value="EAZ38891.1"/>
    <property type="molecule type" value="Genomic_DNA"/>
</dbReference>
<dbReference type="RefSeq" id="XP_015645272.1">
    <property type="nucleotide sequence ID" value="XM_015789786.1"/>
</dbReference>
<dbReference type="SMR" id="Q6VBB2"/>
<dbReference type="FunCoup" id="Q6VBB2">
    <property type="interactions" value="21"/>
</dbReference>
<dbReference type="STRING" id="39947.Q6VBB2"/>
<dbReference type="PaxDb" id="39947-Q6VBB2"/>
<dbReference type="EnsemblPlants" id="Os07t0178600-01">
    <property type="protein sequence ID" value="Os07t0178600-01"/>
    <property type="gene ID" value="Os07g0178600"/>
</dbReference>
<dbReference type="Gramene" id="Os07t0178600-01">
    <property type="protein sequence ID" value="Os07t0178600-01"/>
    <property type="gene ID" value="Os07g0178600"/>
</dbReference>
<dbReference type="KEGG" id="dosa:Os07g0178600"/>
<dbReference type="eggNOG" id="KOG0627">
    <property type="taxonomic scope" value="Eukaryota"/>
</dbReference>
<dbReference type="HOGENOM" id="CLU_030308_1_0_1"/>
<dbReference type="InParanoid" id="Q6VBB2"/>
<dbReference type="OMA" id="EVGHFGF"/>
<dbReference type="OrthoDB" id="60033at2759"/>
<dbReference type="Proteomes" id="UP000000763">
    <property type="component" value="Chromosome 7"/>
</dbReference>
<dbReference type="Proteomes" id="UP000007752">
    <property type="component" value="Chromosome 7"/>
</dbReference>
<dbReference type="Proteomes" id="UP000059680">
    <property type="component" value="Chromosome 7"/>
</dbReference>
<dbReference type="GO" id="GO:0005737">
    <property type="term" value="C:cytoplasm"/>
    <property type="evidence" value="ECO:0007669"/>
    <property type="project" value="UniProtKB-SubCell"/>
</dbReference>
<dbReference type="GO" id="GO:0005634">
    <property type="term" value="C:nucleus"/>
    <property type="evidence" value="ECO:0000318"/>
    <property type="project" value="GO_Central"/>
</dbReference>
<dbReference type="GO" id="GO:0003700">
    <property type="term" value="F:DNA-binding transcription factor activity"/>
    <property type="evidence" value="ECO:0000318"/>
    <property type="project" value="GO_Central"/>
</dbReference>
<dbReference type="GO" id="GO:0043565">
    <property type="term" value="F:sequence-specific DNA binding"/>
    <property type="evidence" value="ECO:0007669"/>
    <property type="project" value="InterPro"/>
</dbReference>
<dbReference type="GO" id="GO:0034605">
    <property type="term" value="P:cellular response to heat"/>
    <property type="evidence" value="ECO:0000318"/>
    <property type="project" value="GO_Central"/>
</dbReference>
<dbReference type="GO" id="GO:0006357">
    <property type="term" value="P:regulation of transcription by RNA polymerase II"/>
    <property type="evidence" value="ECO:0000318"/>
    <property type="project" value="GO_Central"/>
</dbReference>
<dbReference type="FunFam" id="1.10.10.10:FF:000057">
    <property type="entry name" value="Heat shock transcription factor 1"/>
    <property type="match status" value="1"/>
</dbReference>
<dbReference type="Gene3D" id="1.10.10.10">
    <property type="entry name" value="Winged helix-like DNA-binding domain superfamily/Winged helix DNA-binding domain"/>
    <property type="match status" value="1"/>
</dbReference>
<dbReference type="InterPro" id="IPR000232">
    <property type="entry name" value="HSF_DNA-bd"/>
</dbReference>
<dbReference type="InterPro" id="IPR036388">
    <property type="entry name" value="WH-like_DNA-bd_sf"/>
</dbReference>
<dbReference type="InterPro" id="IPR036390">
    <property type="entry name" value="WH_DNA-bd_sf"/>
</dbReference>
<dbReference type="PANTHER" id="PTHR10015">
    <property type="entry name" value="HEAT SHOCK TRANSCRIPTION FACTOR"/>
    <property type="match status" value="1"/>
</dbReference>
<dbReference type="PANTHER" id="PTHR10015:SF402">
    <property type="entry name" value="HEAT STRESS TRANSCRIPTION FACTOR A-2B"/>
    <property type="match status" value="1"/>
</dbReference>
<dbReference type="Pfam" id="PF00447">
    <property type="entry name" value="HSF_DNA-bind"/>
    <property type="match status" value="1"/>
</dbReference>
<dbReference type="PRINTS" id="PR00056">
    <property type="entry name" value="HSFDOMAIN"/>
</dbReference>
<dbReference type="SMART" id="SM00415">
    <property type="entry name" value="HSF"/>
    <property type="match status" value="1"/>
</dbReference>
<dbReference type="SUPFAM" id="SSF46785">
    <property type="entry name" value="Winged helix' DNA-binding domain"/>
    <property type="match status" value="1"/>
</dbReference>
<dbReference type="PROSITE" id="PS00434">
    <property type="entry name" value="HSF_DOMAIN"/>
    <property type="match status" value="1"/>
</dbReference>
<accession>Q6VBB2</accession>
<accession>A0A0P0X300</accession>
<accession>Q7XBH0</accession>
<feature type="chain" id="PRO_0000350822" description="Heat stress transcription factor A-2b">
    <location>
        <begin position="1"/>
        <end position="372"/>
    </location>
</feature>
<feature type="region of interest" description="Hydrophobic repeat HR-A/B">
    <location>
        <begin position="173"/>
        <end position="223"/>
    </location>
</feature>
<feature type="region of interest" description="Disordered" evidence="3">
    <location>
        <begin position="247"/>
        <end position="274"/>
    </location>
</feature>
<feature type="coiled-coil region" evidence="2">
    <location>
        <begin position="165"/>
        <end position="252"/>
    </location>
</feature>
<feature type="short sequence motif" description="Bipartite nuclear localization signal" evidence="2">
    <location>
        <begin position="238"/>
        <end position="253"/>
    </location>
</feature>
<feature type="short sequence motif" description="AHA">
    <location>
        <begin position="328"/>
        <end position="337"/>
    </location>
</feature>
<feature type="short sequence motif" description="Nuclear export signal" evidence="2">
    <location>
        <begin position="356"/>
        <end position="363"/>
    </location>
</feature>
<feature type="sequence conflict" description="In Ref. 1; AAP92754." evidence="6" ref="1">
    <original>V</original>
    <variation>L</variation>
    <location>
        <position position="37"/>
    </location>
</feature>
<feature type="sequence conflict" description="In Ref. 1; AAP92754." evidence="6" ref="1">
    <original>R</original>
    <variation>G</variation>
    <location>
        <position position="40"/>
    </location>
</feature>
<feature type="sequence conflict" description="In Ref. 1; AAP92754." evidence="6" ref="1">
    <original>L</original>
    <variation>F</variation>
    <location>
        <position position="136"/>
    </location>
</feature>
<feature type="sequence conflict" description="In Ref. 1; AAP92754." evidence="6" ref="1">
    <original>L</original>
    <variation>F</variation>
    <location>
        <position position="155"/>
    </location>
</feature>
<feature type="sequence conflict" description="In Ref. 1; AAP92754." evidence="6" ref="1">
    <original>Q</original>
    <variation>K</variation>
    <location>
        <position position="213"/>
    </location>
</feature>
<feature type="sequence conflict" description="In Ref. 1; AAP92754." evidence="6" ref="1">
    <original>M</original>
    <variation>I</variation>
    <location>
        <position position="216"/>
    </location>
</feature>
<feature type="sequence conflict" description="In Ref. 1; AAP92754." evidence="6" ref="1">
    <original>E</original>
    <variation>Q</variation>
    <location>
        <position position="316"/>
    </location>
</feature>
<protein>
    <recommendedName>
        <fullName>Heat stress transcription factor A-2b</fullName>
    </recommendedName>
    <alternativeName>
        <fullName>Heat stress transcription factor 18</fullName>
        <shortName>OsHsf-18</shortName>
    </alternativeName>
    <alternativeName>
        <fullName>Heat stress transcription factor 5</fullName>
        <shortName>rHsf5</shortName>
    </alternativeName>
</protein>
<comment type="function">
    <text evidence="1">Transcriptional regulator that specifically binds DNA of heat shock promoter elements (HSE).</text>
</comment>
<comment type="subunit">
    <text evidence="1">Homotrimer.</text>
</comment>
<comment type="subcellular location">
    <subcellularLocation>
        <location evidence="6">Cytoplasm</location>
    </subcellularLocation>
    <subcellularLocation>
        <location evidence="6">Nucleus</location>
    </subcellularLocation>
</comment>
<comment type="induction">
    <text evidence="4">By heat stress.</text>
</comment>
<comment type="domain">
    <text evidence="5">The hydrophobic-rich region (HR-A/B) corresponds to the oligomerization domain. AHA motifs are transcriptional activator elements.</text>
</comment>
<comment type="PTM">
    <text evidence="1">Exhibits temperature-dependent phosphorylation.</text>
</comment>
<comment type="similarity">
    <text evidence="6">Belongs to the HSF family. Class A subfamily.</text>
</comment>